<feature type="chain" id="PRO_0000230877" description="Transcriptional repressor NrdR">
    <location>
        <begin position="1"/>
        <end position="157"/>
    </location>
</feature>
<feature type="domain" description="ATP-cone" evidence="1">
    <location>
        <begin position="49"/>
        <end position="139"/>
    </location>
</feature>
<feature type="zinc finger region" evidence="1">
    <location>
        <begin position="3"/>
        <end position="34"/>
    </location>
</feature>
<accession>Q3A4L7</accession>
<protein>
    <recommendedName>
        <fullName evidence="1">Transcriptional repressor NrdR</fullName>
    </recommendedName>
</protein>
<proteinExistence type="inferred from homology"/>
<organism>
    <name type="scientific">Syntrophotalea carbinolica (strain DSM 2380 / NBRC 103641 / GraBd1)</name>
    <name type="common">Pelobacter carbinolicus</name>
    <dbReference type="NCBI Taxonomy" id="338963"/>
    <lineage>
        <taxon>Bacteria</taxon>
        <taxon>Pseudomonadati</taxon>
        <taxon>Thermodesulfobacteriota</taxon>
        <taxon>Desulfuromonadia</taxon>
        <taxon>Desulfuromonadales</taxon>
        <taxon>Syntrophotaleaceae</taxon>
        <taxon>Syntrophotalea</taxon>
    </lineage>
</organism>
<reference key="1">
    <citation type="submission" date="2005-10" db="EMBL/GenBank/DDBJ databases">
        <title>Complete sequence of Pelobacter carbinolicus DSM 2380.</title>
        <authorList>
            <person name="Copeland A."/>
            <person name="Lucas S."/>
            <person name="Lapidus A."/>
            <person name="Barry K."/>
            <person name="Detter J.C."/>
            <person name="Glavina T."/>
            <person name="Hammon N."/>
            <person name="Israni S."/>
            <person name="Pitluck S."/>
            <person name="Chertkov O."/>
            <person name="Schmutz J."/>
            <person name="Larimer F."/>
            <person name="Land M."/>
            <person name="Kyrpides N."/>
            <person name="Ivanova N."/>
            <person name="Richardson P."/>
        </authorList>
    </citation>
    <scope>NUCLEOTIDE SEQUENCE [LARGE SCALE GENOMIC DNA]</scope>
    <source>
        <strain>DSM 2380 / NBRC 103641 / GraBd1</strain>
    </source>
</reference>
<keyword id="KW-0067">ATP-binding</keyword>
<keyword id="KW-0238">DNA-binding</keyword>
<keyword id="KW-0479">Metal-binding</keyword>
<keyword id="KW-0547">Nucleotide-binding</keyword>
<keyword id="KW-1185">Reference proteome</keyword>
<keyword id="KW-0678">Repressor</keyword>
<keyword id="KW-0804">Transcription</keyword>
<keyword id="KW-0805">Transcription regulation</keyword>
<keyword id="KW-0862">Zinc</keyword>
<keyword id="KW-0863">Zinc-finger</keyword>
<comment type="function">
    <text evidence="1">Negatively regulates transcription of bacterial ribonucleotide reductase nrd genes and operons by binding to NrdR-boxes.</text>
</comment>
<comment type="cofactor">
    <cofactor evidence="1">
        <name>Zn(2+)</name>
        <dbReference type="ChEBI" id="CHEBI:29105"/>
    </cofactor>
    <text evidence="1">Binds 1 zinc ion.</text>
</comment>
<comment type="similarity">
    <text evidence="1">Belongs to the NrdR family.</text>
</comment>
<sequence length="157" mass="18225">MKCPFCGFADTRVIDSRLGKEGNNIRRRRECSQCERRFTTFERVEDMLPLIIKKDARRQPFDRKKVIGGIQRACEKRPVSIATIEKIVDTLERQLQESGEREIESKIIGQAVMDALHDLDQVAYVRFASVYRQFKDINEFMAELKDILAEGGNVRDN</sequence>
<name>NRDR_SYNC1</name>
<evidence type="ECO:0000255" key="1">
    <source>
        <dbReference type="HAMAP-Rule" id="MF_00440"/>
    </source>
</evidence>
<gene>
    <name evidence="1" type="primary">nrdR</name>
    <name type="ordered locus">Pcar_1444</name>
</gene>
<dbReference type="EMBL" id="CP000142">
    <property type="protein sequence ID" value="ABA88690.1"/>
    <property type="molecule type" value="Genomic_DNA"/>
</dbReference>
<dbReference type="RefSeq" id="WP_011341173.1">
    <property type="nucleotide sequence ID" value="NC_007498.2"/>
</dbReference>
<dbReference type="SMR" id="Q3A4L7"/>
<dbReference type="STRING" id="338963.Pcar_1444"/>
<dbReference type="KEGG" id="pca:Pcar_1444"/>
<dbReference type="eggNOG" id="COG1327">
    <property type="taxonomic scope" value="Bacteria"/>
</dbReference>
<dbReference type="HOGENOM" id="CLU_108412_0_0_7"/>
<dbReference type="OrthoDB" id="9807461at2"/>
<dbReference type="Proteomes" id="UP000002534">
    <property type="component" value="Chromosome"/>
</dbReference>
<dbReference type="GO" id="GO:0005524">
    <property type="term" value="F:ATP binding"/>
    <property type="evidence" value="ECO:0007669"/>
    <property type="project" value="UniProtKB-KW"/>
</dbReference>
<dbReference type="GO" id="GO:0003677">
    <property type="term" value="F:DNA binding"/>
    <property type="evidence" value="ECO:0007669"/>
    <property type="project" value="UniProtKB-KW"/>
</dbReference>
<dbReference type="GO" id="GO:0008270">
    <property type="term" value="F:zinc ion binding"/>
    <property type="evidence" value="ECO:0007669"/>
    <property type="project" value="UniProtKB-UniRule"/>
</dbReference>
<dbReference type="GO" id="GO:0045892">
    <property type="term" value="P:negative regulation of DNA-templated transcription"/>
    <property type="evidence" value="ECO:0007669"/>
    <property type="project" value="UniProtKB-UniRule"/>
</dbReference>
<dbReference type="HAMAP" id="MF_00440">
    <property type="entry name" value="NrdR"/>
    <property type="match status" value="1"/>
</dbReference>
<dbReference type="InterPro" id="IPR005144">
    <property type="entry name" value="ATP-cone_dom"/>
</dbReference>
<dbReference type="InterPro" id="IPR055173">
    <property type="entry name" value="NrdR-like_N"/>
</dbReference>
<dbReference type="InterPro" id="IPR003796">
    <property type="entry name" value="RNR_NrdR-like"/>
</dbReference>
<dbReference type="NCBIfam" id="TIGR00244">
    <property type="entry name" value="transcriptional regulator NrdR"/>
    <property type="match status" value="1"/>
</dbReference>
<dbReference type="PANTHER" id="PTHR30455">
    <property type="entry name" value="TRANSCRIPTIONAL REPRESSOR NRDR"/>
    <property type="match status" value="1"/>
</dbReference>
<dbReference type="PANTHER" id="PTHR30455:SF2">
    <property type="entry name" value="TRANSCRIPTIONAL REPRESSOR NRDR"/>
    <property type="match status" value="1"/>
</dbReference>
<dbReference type="Pfam" id="PF03477">
    <property type="entry name" value="ATP-cone"/>
    <property type="match status" value="1"/>
</dbReference>
<dbReference type="Pfam" id="PF22811">
    <property type="entry name" value="Zn_ribbon_NrdR"/>
    <property type="match status" value="1"/>
</dbReference>
<dbReference type="PROSITE" id="PS51161">
    <property type="entry name" value="ATP_CONE"/>
    <property type="match status" value="1"/>
</dbReference>